<keyword id="KW-0256">Endoplasmic reticulum</keyword>
<keyword id="KW-0378">Hydrolase</keyword>
<keyword id="KW-0472">Membrane</keyword>
<keyword id="KW-0645">Protease</keyword>
<keyword id="KW-1185">Reference proteome</keyword>
<keyword id="KW-0812">Transmembrane</keyword>
<keyword id="KW-1133">Transmembrane helix</keyword>
<accession>O94448</accession>
<protein>
    <recommendedName>
        <fullName>Probable CAAX prenyl protease 2</fullName>
        <ecNumber evidence="1">3.4.26.1</ecNumber>
    </recommendedName>
    <alternativeName>
        <fullName>Prenyl protein-specific endoprotease 2</fullName>
        <shortName>PPSEP 2</shortName>
    </alternativeName>
</protein>
<comment type="function">
    <text evidence="1">Protease involved in the processing of a variety of prenylated proteins containing the C-terminal CAAX motif, where C is a cysteine modified with an isoprenoid lipid, A is an aliphatic amino acid and X is any C-terminal amino acid. Proteolytically removes the C-terminal three residues of farnesylated proteins, leaving the prenylated cysteine as the new C-terminus.</text>
</comment>
<comment type="catalytic activity">
    <reaction evidence="1">
        <text>Hydrolyzes the peptide bond -P2-(S-farnesyl or geranylgeranyl)C-P1'-P2'-P3'-COOH where P1' and P2' are amino acids with aliphatic sidechains and P3' is any C-terminal residue.</text>
        <dbReference type="EC" id="3.4.26.1"/>
    </reaction>
</comment>
<comment type="subcellular location">
    <subcellularLocation>
        <location evidence="1">Endoplasmic reticulum membrane</location>
        <topology evidence="3">Multi-pass membrane protein</topology>
    </subcellularLocation>
</comment>
<comment type="similarity">
    <text evidence="4">Belongs to the peptidase U48 family.</text>
</comment>
<feature type="chain" id="PRO_0000194833" description="Probable CAAX prenyl protease 2">
    <location>
        <begin position="1"/>
        <end position="271"/>
    </location>
</feature>
<feature type="transmembrane region" description="Helical" evidence="3">
    <location>
        <begin position="3"/>
        <end position="23"/>
    </location>
</feature>
<feature type="transmembrane region" description="Helical" evidence="3">
    <location>
        <begin position="42"/>
        <end position="62"/>
    </location>
</feature>
<feature type="transmembrane region" description="Helical" evidence="3">
    <location>
        <begin position="174"/>
        <end position="194"/>
    </location>
</feature>
<feature type="transmembrane region" description="Helical" evidence="3">
    <location>
        <begin position="236"/>
        <end position="256"/>
    </location>
</feature>
<feature type="active site" description="Proton donor/acceptor" evidence="2">
    <location>
        <position position="126"/>
    </location>
</feature>
<feature type="active site" description="Proton donor/acceptor" evidence="2">
    <location>
        <position position="160"/>
    </location>
</feature>
<feature type="site" description="Transition state stabilizer" evidence="2">
    <location>
        <position position="213"/>
    </location>
</feature>
<feature type="site" description="Transition state stabilizer" evidence="2">
    <location>
        <position position="217"/>
    </location>
</feature>
<organism>
    <name type="scientific">Schizosaccharomyces pombe (strain 972 / ATCC 24843)</name>
    <name type="common">Fission yeast</name>
    <dbReference type="NCBI Taxonomy" id="284812"/>
    <lineage>
        <taxon>Eukaryota</taxon>
        <taxon>Fungi</taxon>
        <taxon>Dikarya</taxon>
        <taxon>Ascomycota</taxon>
        <taxon>Taphrinomycotina</taxon>
        <taxon>Schizosaccharomycetes</taxon>
        <taxon>Schizosaccharomycetales</taxon>
        <taxon>Schizosaccharomycetaceae</taxon>
        <taxon>Schizosaccharomyces</taxon>
    </lineage>
</organism>
<proteinExistence type="inferred from homology"/>
<gene>
    <name type="ORF">SPAC1687.02</name>
</gene>
<dbReference type="EC" id="3.4.26.1" evidence="1"/>
<dbReference type="EMBL" id="CU329670">
    <property type="protein sequence ID" value="CAA22596.1"/>
    <property type="molecule type" value="Genomic_DNA"/>
</dbReference>
<dbReference type="PIR" id="T37745">
    <property type="entry name" value="T37745"/>
</dbReference>
<dbReference type="BioGRID" id="279204">
    <property type="interactions" value="3"/>
</dbReference>
<dbReference type="FunCoup" id="O94448">
    <property type="interactions" value="336"/>
</dbReference>
<dbReference type="STRING" id="284812.O94448"/>
<dbReference type="MEROPS" id="G05.002"/>
<dbReference type="PaxDb" id="4896-SPAC1687.02.1"/>
<dbReference type="EnsemblFungi" id="SPAC1687.02.1">
    <property type="protein sequence ID" value="SPAC1687.02.1:pep"/>
    <property type="gene ID" value="SPAC1687.02"/>
</dbReference>
<dbReference type="KEGG" id="spo:2542754"/>
<dbReference type="PomBase" id="SPAC1687.02"/>
<dbReference type="VEuPathDB" id="FungiDB:SPAC1687.02"/>
<dbReference type="eggNOG" id="KOG4130">
    <property type="taxonomic scope" value="Eukaryota"/>
</dbReference>
<dbReference type="HOGENOM" id="CLU_049909_1_0_1"/>
<dbReference type="InParanoid" id="O94448"/>
<dbReference type="OMA" id="HSFCNWC"/>
<dbReference type="PhylomeDB" id="O94448"/>
<dbReference type="Reactome" id="R-SPO-5689880">
    <property type="pathway name" value="Ub-specific processing proteases"/>
</dbReference>
<dbReference type="Reactome" id="R-SPO-9648002">
    <property type="pathway name" value="RAS processing"/>
</dbReference>
<dbReference type="PRO" id="PR:O94448"/>
<dbReference type="Proteomes" id="UP000002485">
    <property type="component" value="Chromosome I"/>
</dbReference>
<dbReference type="GO" id="GO:0005783">
    <property type="term" value="C:endoplasmic reticulum"/>
    <property type="evidence" value="ECO:0007005"/>
    <property type="project" value="PomBase"/>
</dbReference>
<dbReference type="GO" id="GO:0005789">
    <property type="term" value="C:endoplasmic reticulum membrane"/>
    <property type="evidence" value="ECO:0000318"/>
    <property type="project" value="GO_Central"/>
</dbReference>
<dbReference type="GO" id="GO:0004222">
    <property type="term" value="F:metalloendopeptidase activity"/>
    <property type="evidence" value="ECO:0000318"/>
    <property type="project" value="GO_Central"/>
</dbReference>
<dbReference type="GO" id="GO:0071586">
    <property type="term" value="P:CAAX-box protein processing"/>
    <property type="evidence" value="ECO:0000318"/>
    <property type="project" value="GO_Central"/>
</dbReference>
<dbReference type="GO" id="GO:0007323">
    <property type="term" value="P:peptide pheromone maturation"/>
    <property type="evidence" value="ECO:0000266"/>
    <property type="project" value="PomBase"/>
</dbReference>
<dbReference type="InterPro" id="IPR039731">
    <property type="entry name" value="Rce1"/>
</dbReference>
<dbReference type="InterPro" id="IPR003675">
    <property type="entry name" value="Rce1/LyrA-like_dom"/>
</dbReference>
<dbReference type="PANTHER" id="PTHR13046:SF0">
    <property type="entry name" value="CAAX PRENYL PROTEASE 2"/>
    <property type="match status" value="1"/>
</dbReference>
<dbReference type="PANTHER" id="PTHR13046">
    <property type="entry name" value="PROTEASE U48 CAAX PRENYL PROTEASE RCE1"/>
    <property type="match status" value="1"/>
</dbReference>
<dbReference type="Pfam" id="PF02517">
    <property type="entry name" value="Rce1-like"/>
    <property type="match status" value="1"/>
</dbReference>
<evidence type="ECO:0000250" key="1">
    <source>
        <dbReference type="UniProtKB" id="Q03530"/>
    </source>
</evidence>
<evidence type="ECO:0000250" key="2">
    <source>
        <dbReference type="UniProtKB" id="Q6LZY8"/>
    </source>
</evidence>
<evidence type="ECO:0000255" key="3"/>
<evidence type="ECO:0000305" key="4"/>
<reference key="1">
    <citation type="journal article" date="2002" name="Nature">
        <title>The genome sequence of Schizosaccharomyces pombe.</title>
        <authorList>
            <person name="Wood V."/>
            <person name="Gwilliam R."/>
            <person name="Rajandream M.A."/>
            <person name="Lyne M.H."/>
            <person name="Lyne R."/>
            <person name="Stewart A."/>
            <person name="Sgouros J.G."/>
            <person name="Peat N."/>
            <person name="Hayles J."/>
            <person name="Baker S.G."/>
            <person name="Basham D."/>
            <person name="Bowman S."/>
            <person name="Brooks K."/>
            <person name="Brown D."/>
            <person name="Brown S."/>
            <person name="Chillingworth T."/>
            <person name="Churcher C.M."/>
            <person name="Collins M."/>
            <person name="Connor R."/>
            <person name="Cronin A."/>
            <person name="Davis P."/>
            <person name="Feltwell T."/>
            <person name="Fraser A."/>
            <person name="Gentles S."/>
            <person name="Goble A."/>
            <person name="Hamlin N."/>
            <person name="Harris D.E."/>
            <person name="Hidalgo J."/>
            <person name="Hodgson G."/>
            <person name="Holroyd S."/>
            <person name="Hornsby T."/>
            <person name="Howarth S."/>
            <person name="Huckle E.J."/>
            <person name="Hunt S."/>
            <person name="Jagels K."/>
            <person name="James K.D."/>
            <person name="Jones L."/>
            <person name="Jones M."/>
            <person name="Leather S."/>
            <person name="McDonald S."/>
            <person name="McLean J."/>
            <person name="Mooney P."/>
            <person name="Moule S."/>
            <person name="Mungall K.L."/>
            <person name="Murphy L.D."/>
            <person name="Niblett D."/>
            <person name="Odell C."/>
            <person name="Oliver K."/>
            <person name="O'Neil S."/>
            <person name="Pearson D."/>
            <person name="Quail M.A."/>
            <person name="Rabbinowitsch E."/>
            <person name="Rutherford K.M."/>
            <person name="Rutter S."/>
            <person name="Saunders D."/>
            <person name="Seeger K."/>
            <person name="Sharp S."/>
            <person name="Skelton J."/>
            <person name="Simmonds M.N."/>
            <person name="Squares R."/>
            <person name="Squares S."/>
            <person name="Stevens K."/>
            <person name="Taylor K."/>
            <person name="Taylor R.G."/>
            <person name="Tivey A."/>
            <person name="Walsh S.V."/>
            <person name="Warren T."/>
            <person name="Whitehead S."/>
            <person name="Woodward J.R."/>
            <person name="Volckaert G."/>
            <person name="Aert R."/>
            <person name="Robben J."/>
            <person name="Grymonprez B."/>
            <person name="Weltjens I."/>
            <person name="Vanstreels E."/>
            <person name="Rieger M."/>
            <person name="Schaefer M."/>
            <person name="Mueller-Auer S."/>
            <person name="Gabel C."/>
            <person name="Fuchs M."/>
            <person name="Duesterhoeft A."/>
            <person name="Fritzc C."/>
            <person name="Holzer E."/>
            <person name="Moestl D."/>
            <person name="Hilbert H."/>
            <person name="Borzym K."/>
            <person name="Langer I."/>
            <person name="Beck A."/>
            <person name="Lehrach H."/>
            <person name="Reinhardt R."/>
            <person name="Pohl T.M."/>
            <person name="Eger P."/>
            <person name="Zimmermann W."/>
            <person name="Wedler H."/>
            <person name="Wambutt R."/>
            <person name="Purnelle B."/>
            <person name="Goffeau A."/>
            <person name="Cadieu E."/>
            <person name="Dreano S."/>
            <person name="Gloux S."/>
            <person name="Lelaure V."/>
            <person name="Mottier S."/>
            <person name="Galibert F."/>
            <person name="Aves S.J."/>
            <person name="Xiang Z."/>
            <person name="Hunt C."/>
            <person name="Moore K."/>
            <person name="Hurst S.M."/>
            <person name="Lucas M."/>
            <person name="Rochet M."/>
            <person name="Gaillardin C."/>
            <person name="Tallada V.A."/>
            <person name="Garzon A."/>
            <person name="Thode G."/>
            <person name="Daga R.R."/>
            <person name="Cruzado L."/>
            <person name="Jimenez J."/>
            <person name="Sanchez M."/>
            <person name="del Rey F."/>
            <person name="Benito J."/>
            <person name="Dominguez A."/>
            <person name="Revuelta J.L."/>
            <person name="Moreno S."/>
            <person name="Armstrong J."/>
            <person name="Forsburg S.L."/>
            <person name="Cerutti L."/>
            <person name="Lowe T."/>
            <person name="McCombie W.R."/>
            <person name="Paulsen I."/>
            <person name="Potashkin J."/>
            <person name="Shpakovski G.V."/>
            <person name="Ussery D."/>
            <person name="Barrell B.G."/>
            <person name="Nurse P."/>
        </authorList>
    </citation>
    <scope>NUCLEOTIDE SEQUENCE [LARGE SCALE GENOMIC DNA]</scope>
    <source>
        <strain>972 / ATCC 24843</strain>
    </source>
</reference>
<name>RCE1_SCHPO</name>
<sequence>MRVYLISFFFTAIYVVSLYTFPVARPRPSLNRNDPKVITARCISVLLASSVCCILTRLIIGPSLNVFTFPTDQVLKSLLHAATIFIGPLYEVWIVDKEYRLFFIHLKDCLSNAIAWRNIIIGPLSEELTFRCCIVPICEAAGWSRLKIIFVAPLLFGMAHIHHTYEFLLAYPNAYIAAALQTVVQFSYTTVFGWYTTHLFLSTHSLFPSFLVHAFCNSMGLPTLYGKIGNRNQTRIYYTLLLLGVLIFYMTWGITDFNNHQDFEPRLVPLN</sequence>